<organism evidence="7">
    <name type="scientific">Arabidopsis thaliana</name>
    <name type="common">Mouse-ear cress</name>
    <dbReference type="NCBI Taxonomy" id="3702"/>
    <lineage>
        <taxon>Eukaryota</taxon>
        <taxon>Viridiplantae</taxon>
        <taxon>Streptophyta</taxon>
        <taxon>Embryophyta</taxon>
        <taxon>Tracheophyta</taxon>
        <taxon>Spermatophyta</taxon>
        <taxon>Magnoliopsida</taxon>
        <taxon>eudicotyledons</taxon>
        <taxon>Gunneridae</taxon>
        <taxon>Pentapetalae</taxon>
        <taxon>rosids</taxon>
        <taxon>malvids</taxon>
        <taxon>Brassicales</taxon>
        <taxon>Brassicaceae</taxon>
        <taxon>Camelineae</taxon>
        <taxon>Arabidopsis</taxon>
    </lineage>
</organism>
<sequence>MATLRAMLKNAFILFLFTLTIMAKTVFSQQCGTTGCAANLCCSRYGYCGTTDAYCGTGCRSGPCSSSTTPIPPTPSGGAGGLNADPRDTIENVVTPAFFDGIMSKVGNGCPAKGFYTRQAFIAAAQSFDAYKGTVAKREIAAMLAQFSHESGSFCYKEEIARGKYCSPSTAYPCTPGKDYYGRGPIQITWNYNYGAAGKFLGLPLLTDPDMVARSPQVAFQCAMWFWNLNVRPVLDQGFGATTRKINGGECNGRRPAAVQSRVNYYLEFCRTLGITPGANLSC</sequence>
<protein>
    <recommendedName>
        <fullName evidence="5">Endochitinase At2g43620</fullName>
        <ecNumber>3.2.1.14</ecNumber>
    </recommendedName>
</protein>
<name>CHI62_ARATH</name>
<evidence type="ECO:0000250" key="1">
    <source>
        <dbReference type="UniProtKB" id="P29022"/>
    </source>
</evidence>
<evidence type="ECO:0000255" key="2"/>
<evidence type="ECO:0000255" key="3">
    <source>
        <dbReference type="PROSITE-ProRule" id="PRU00261"/>
    </source>
</evidence>
<evidence type="ECO:0000255" key="4">
    <source>
        <dbReference type="PROSITE-ProRule" id="PRU00498"/>
    </source>
</evidence>
<evidence type="ECO:0000305" key="5"/>
<evidence type="ECO:0000312" key="6">
    <source>
        <dbReference type="EMBL" id="AEC10296.1"/>
    </source>
</evidence>
<evidence type="ECO:0000312" key="7">
    <source>
        <dbReference type="Proteomes" id="UP000006548"/>
    </source>
</evidence>
<feature type="signal peptide" evidence="2">
    <location>
        <begin position="1"/>
        <end position="28"/>
    </location>
</feature>
<feature type="chain" id="PRO_0000433916" description="Endochitinase At2g43620" evidence="2">
    <location>
        <begin position="29"/>
        <end position="283"/>
    </location>
</feature>
<feature type="domain" description="Chitin-binding type-1" evidence="3">
    <location>
        <begin position="29"/>
        <end position="66"/>
    </location>
</feature>
<feature type="region of interest" description="Catalytic" evidence="1">
    <location>
        <begin position="88"/>
        <end position="283"/>
    </location>
</feature>
<feature type="active site" description="Proton donor" evidence="1">
    <location>
        <position position="150"/>
    </location>
</feature>
<feature type="glycosylation site" description="N-linked (GlcNAc...) asparagine" evidence="4">
    <location>
        <position position="280"/>
    </location>
</feature>
<feature type="disulfide bond" evidence="3">
    <location>
        <begin position="31"/>
        <end position="42"/>
    </location>
</feature>
<feature type="disulfide bond" evidence="3">
    <location>
        <begin position="36"/>
        <end position="48"/>
    </location>
</feature>
<feature type="disulfide bond" evidence="3">
    <location>
        <begin position="41"/>
        <end position="55"/>
    </location>
</feature>
<feature type="disulfide bond" evidence="3">
    <location>
        <begin position="59"/>
        <end position="64"/>
    </location>
</feature>
<proteinExistence type="inferred from homology"/>
<gene>
    <name evidence="6" type="ordered locus">At2g43620</name>
    <name evidence="6" type="ORF">F18O19.27</name>
</gene>
<dbReference type="EC" id="3.2.1.14"/>
<dbReference type="EMBL" id="AC002333">
    <property type="protein sequence ID" value="AAB64044.1"/>
    <property type="molecule type" value="Genomic_DNA"/>
</dbReference>
<dbReference type="EMBL" id="CP002685">
    <property type="protein sequence ID" value="AEC10296.1"/>
    <property type="molecule type" value="Genomic_DNA"/>
</dbReference>
<dbReference type="PIR" id="D84868">
    <property type="entry name" value="D84868"/>
</dbReference>
<dbReference type="RefSeq" id="NP_181890.1">
    <property type="nucleotide sequence ID" value="NM_129924.3"/>
</dbReference>
<dbReference type="SMR" id="O22841"/>
<dbReference type="FunCoup" id="O22841">
    <property type="interactions" value="136"/>
</dbReference>
<dbReference type="STRING" id="3702.O22841"/>
<dbReference type="CAZy" id="CBM18">
    <property type="family name" value="Carbohydrate-Binding Module Family 18"/>
</dbReference>
<dbReference type="CAZy" id="GH19">
    <property type="family name" value="Glycoside Hydrolase Family 19"/>
</dbReference>
<dbReference type="GlyGen" id="O22841">
    <property type="glycosylation" value="3 sites"/>
</dbReference>
<dbReference type="MetOSite" id="O22841"/>
<dbReference type="PaxDb" id="3702-AT2G43620.1"/>
<dbReference type="ProMEX" id="O22841"/>
<dbReference type="ProteomicsDB" id="246495"/>
<dbReference type="EnsemblPlants" id="AT2G43620.1">
    <property type="protein sequence ID" value="AT2G43620.1"/>
    <property type="gene ID" value="AT2G43620"/>
</dbReference>
<dbReference type="GeneID" id="818964"/>
<dbReference type="Gramene" id="AT2G43620.1">
    <property type="protein sequence ID" value="AT2G43620.1"/>
    <property type="gene ID" value="AT2G43620"/>
</dbReference>
<dbReference type="KEGG" id="ath:AT2G43620"/>
<dbReference type="Araport" id="AT2G43620"/>
<dbReference type="TAIR" id="AT2G43620"/>
<dbReference type="eggNOG" id="KOG4742">
    <property type="taxonomic scope" value="Eukaryota"/>
</dbReference>
<dbReference type="HOGENOM" id="CLU_045506_1_1_1"/>
<dbReference type="InParanoid" id="O22841"/>
<dbReference type="OMA" id="RGKYCQA"/>
<dbReference type="OrthoDB" id="5985073at2759"/>
<dbReference type="PhylomeDB" id="O22841"/>
<dbReference type="BioCyc" id="ARA:AT2G43620-MONOMER"/>
<dbReference type="PRO" id="PR:O22841"/>
<dbReference type="Proteomes" id="UP000006548">
    <property type="component" value="Chromosome 2"/>
</dbReference>
<dbReference type="ExpressionAtlas" id="O22841">
    <property type="expression patterns" value="baseline and differential"/>
</dbReference>
<dbReference type="GO" id="GO:0048046">
    <property type="term" value="C:apoplast"/>
    <property type="evidence" value="ECO:0007005"/>
    <property type="project" value="TAIR"/>
</dbReference>
<dbReference type="GO" id="GO:0099503">
    <property type="term" value="C:secretory vesicle"/>
    <property type="evidence" value="ECO:0007005"/>
    <property type="project" value="TAIR"/>
</dbReference>
<dbReference type="GO" id="GO:0008061">
    <property type="term" value="F:chitin binding"/>
    <property type="evidence" value="ECO:0007669"/>
    <property type="project" value="UniProtKB-KW"/>
</dbReference>
<dbReference type="GO" id="GO:0008843">
    <property type="term" value="F:endochitinase activity"/>
    <property type="evidence" value="ECO:0007669"/>
    <property type="project" value="UniProtKB-EC"/>
</dbReference>
<dbReference type="GO" id="GO:0016998">
    <property type="term" value="P:cell wall macromolecule catabolic process"/>
    <property type="evidence" value="ECO:0007669"/>
    <property type="project" value="InterPro"/>
</dbReference>
<dbReference type="GO" id="GO:0006032">
    <property type="term" value="P:chitin catabolic process"/>
    <property type="evidence" value="ECO:0007669"/>
    <property type="project" value="UniProtKB-KW"/>
</dbReference>
<dbReference type="GO" id="GO:0006952">
    <property type="term" value="P:defense response"/>
    <property type="evidence" value="ECO:0007669"/>
    <property type="project" value="UniProtKB-KW"/>
</dbReference>
<dbReference type="GO" id="GO:0000272">
    <property type="term" value="P:polysaccharide catabolic process"/>
    <property type="evidence" value="ECO:0007669"/>
    <property type="project" value="UniProtKB-KW"/>
</dbReference>
<dbReference type="CDD" id="cd00325">
    <property type="entry name" value="chitinase_GH19"/>
    <property type="match status" value="1"/>
</dbReference>
<dbReference type="CDD" id="cd00035">
    <property type="entry name" value="ChtBD1"/>
    <property type="match status" value="1"/>
</dbReference>
<dbReference type="FunFam" id="3.30.20.10:FF:000001">
    <property type="entry name" value="Endochitinase (Chitinase)"/>
    <property type="match status" value="1"/>
</dbReference>
<dbReference type="FunFam" id="3.30.60.10:FF:000005">
    <property type="entry name" value="Endochitinase At2g43610"/>
    <property type="match status" value="1"/>
</dbReference>
<dbReference type="Gene3D" id="1.10.530.10">
    <property type="match status" value="1"/>
</dbReference>
<dbReference type="Gene3D" id="3.30.20.10">
    <property type="entry name" value="Endochitinase, domain 2"/>
    <property type="match status" value="1"/>
</dbReference>
<dbReference type="Gene3D" id="3.30.60.10">
    <property type="entry name" value="Endochitinase-like"/>
    <property type="match status" value="1"/>
</dbReference>
<dbReference type="InterPro" id="IPR001002">
    <property type="entry name" value="Chitin-bd_1"/>
</dbReference>
<dbReference type="InterPro" id="IPR018371">
    <property type="entry name" value="Chitin-binding_1_CS"/>
</dbReference>
<dbReference type="InterPro" id="IPR036861">
    <property type="entry name" value="Endochitinase-like_sf"/>
</dbReference>
<dbReference type="InterPro" id="IPR016283">
    <property type="entry name" value="Glyco_hydro_19"/>
</dbReference>
<dbReference type="InterPro" id="IPR000726">
    <property type="entry name" value="Glyco_hydro_19_cat"/>
</dbReference>
<dbReference type="InterPro" id="IPR023346">
    <property type="entry name" value="Lysozyme-like_dom_sf"/>
</dbReference>
<dbReference type="PANTHER" id="PTHR22595:SF126">
    <property type="entry name" value="CHITIN-BINDING TYPE-1 DOMAIN-CONTAINING PROTEIN"/>
    <property type="match status" value="1"/>
</dbReference>
<dbReference type="PANTHER" id="PTHR22595">
    <property type="entry name" value="CHITINASE-RELATED"/>
    <property type="match status" value="1"/>
</dbReference>
<dbReference type="Pfam" id="PF00187">
    <property type="entry name" value="Chitin_bind_1"/>
    <property type="match status" value="1"/>
</dbReference>
<dbReference type="Pfam" id="PF00182">
    <property type="entry name" value="Glyco_hydro_19"/>
    <property type="match status" value="2"/>
</dbReference>
<dbReference type="PIRSF" id="PIRSF001060">
    <property type="entry name" value="Endochitinase"/>
    <property type="match status" value="1"/>
</dbReference>
<dbReference type="PRINTS" id="PR00451">
    <property type="entry name" value="CHITINBINDNG"/>
</dbReference>
<dbReference type="SMART" id="SM00270">
    <property type="entry name" value="ChtBD1"/>
    <property type="match status" value="1"/>
</dbReference>
<dbReference type="SUPFAM" id="SSF53955">
    <property type="entry name" value="Lysozyme-like"/>
    <property type="match status" value="1"/>
</dbReference>
<dbReference type="SUPFAM" id="SSF57016">
    <property type="entry name" value="Plant lectins/antimicrobial peptides"/>
    <property type="match status" value="1"/>
</dbReference>
<dbReference type="PROSITE" id="PS00026">
    <property type="entry name" value="CHIT_BIND_I_1"/>
    <property type="match status" value="1"/>
</dbReference>
<dbReference type="PROSITE" id="PS50941">
    <property type="entry name" value="CHIT_BIND_I_2"/>
    <property type="match status" value="1"/>
</dbReference>
<reference key="1">
    <citation type="journal article" date="1999" name="Nature">
        <title>Sequence and analysis of chromosome 2 of the plant Arabidopsis thaliana.</title>
        <authorList>
            <person name="Lin X."/>
            <person name="Kaul S."/>
            <person name="Rounsley S.D."/>
            <person name="Shea T.P."/>
            <person name="Benito M.-I."/>
            <person name="Town C.D."/>
            <person name="Fujii C.Y."/>
            <person name="Mason T.M."/>
            <person name="Bowman C.L."/>
            <person name="Barnstead M.E."/>
            <person name="Feldblyum T.V."/>
            <person name="Buell C.R."/>
            <person name="Ketchum K.A."/>
            <person name="Lee J.J."/>
            <person name="Ronning C.M."/>
            <person name="Koo H.L."/>
            <person name="Moffat K.S."/>
            <person name="Cronin L.A."/>
            <person name="Shen M."/>
            <person name="Pai G."/>
            <person name="Van Aken S."/>
            <person name="Umayam L."/>
            <person name="Tallon L.J."/>
            <person name="Gill J.E."/>
            <person name="Adams M.D."/>
            <person name="Carrera A.J."/>
            <person name="Creasy T.H."/>
            <person name="Goodman H.M."/>
            <person name="Somerville C.R."/>
            <person name="Copenhaver G.P."/>
            <person name="Preuss D."/>
            <person name="Nierman W.C."/>
            <person name="White O."/>
            <person name="Eisen J.A."/>
            <person name="Salzberg S.L."/>
            <person name="Fraser C.M."/>
            <person name="Venter J.C."/>
        </authorList>
    </citation>
    <scope>NUCLEOTIDE SEQUENCE [LARGE SCALE GENOMIC DNA]</scope>
    <source>
        <strain>cv. Columbia</strain>
    </source>
</reference>
<reference key="2">
    <citation type="journal article" date="2017" name="Plant J.">
        <title>Araport11: a complete reannotation of the Arabidopsis thaliana reference genome.</title>
        <authorList>
            <person name="Cheng C.Y."/>
            <person name="Krishnakumar V."/>
            <person name="Chan A.P."/>
            <person name="Thibaud-Nissen F."/>
            <person name="Schobel S."/>
            <person name="Town C.D."/>
        </authorList>
    </citation>
    <scope>GENOME REANNOTATION</scope>
    <source>
        <strain>cv. Columbia</strain>
    </source>
</reference>
<reference key="3">
    <citation type="journal article" date="2001" name="Planta">
        <title>Expression pattern of the Arabidopsis thaliana AtEP3/AtchitIV endochitinase gene.</title>
        <authorList>
            <person name="Passarinho P.A."/>
            <person name="Van Hengel A.J."/>
            <person name="Fransz P.F."/>
            <person name="de Vries S.C."/>
        </authorList>
    </citation>
    <scope>GENE FAMILY</scope>
</reference>
<keyword id="KW-0119">Carbohydrate metabolism</keyword>
<keyword id="KW-0146">Chitin degradation</keyword>
<keyword id="KW-0147">Chitin-binding</keyword>
<keyword id="KW-1015">Disulfide bond</keyword>
<keyword id="KW-0325">Glycoprotein</keyword>
<keyword id="KW-0326">Glycosidase</keyword>
<keyword id="KW-0378">Hydrolase</keyword>
<keyword id="KW-0611">Plant defense</keyword>
<keyword id="KW-0624">Polysaccharide degradation</keyword>
<keyword id="KW-1185">Reference proteome</keyword>
<keyword id="KW-0732">Signal</keyword>
<accession>O22841</accession>
<comment type="catalytic activity">
    <reaction evidence="1">
        <text>Random endo-hydrolysis of N-acetyl-beta-D-glucosaminide (1-&gt;4)-beta-linkages in chitin and chitodextrins.</text>
        <dbReference type="EC" id="3.2.1.14"/>
    </reaction>
</comment>
<comment type="similarity">
    <text evidence="5">Belongs to the glycosyl hydrolase 19 family. Chitinase class I subfamily.</text>
</comment>